<gene>
    <name evidence="1" type="primary">dxs</name>
    <name type="ordered locus">TW280</name>
</gene>
<evidence type="ECO:0000255" key="1">
    <source>
        <dbReference type="HAMAP-Rule" id="MF_00315"/>
    </source>
</evidence>
<dbReference type="EC" id="2.2.1.7" evidence="1"/>
<dbReference type="EMBL" id="BX251410">
    <property type="protein sequence ID" value="CAD66954.1"/>
    <property type="molecule type" value="Genomic_DNA"/>
</dbReference>
<dbReference type="RefSeq" id="WP_011096234.1">
    <property type="nucleotide sequence ID" value="NC_004551.1"/>
</dbReference>
<dbReference type="SMR" id="Q83I20"/>
<dbReference type="GeneID" id="67388054"/>
<dbReference type="KEGG" id="tws:TW280"/>
<dbReference type="HOGENOM" id="CLU_009227_1_4_11"/>
<dbReference type="UniPathway" id="UPA00064">
    <property type="reaction ID" value="UER00091"/>
</dbReference>
<dbReference type="GO" id="GO:0005829">
    <property type="term" value="C:cytosol"/>
    <property type="evidence" value="ECO:0007669"/>
    <property type="project" value="TreeGrafter"/>
</dbReference>
<dbReference type="GO" id="GO:0008661">
    <property type="term" value="F:1-deoxy-D-xylulose-5-phosphate synthase activity"/>
    <property type="evidence" value="ECO:0007669"/>
    <property type="project" value="UniProtKB-UniRule"/>
</dbReference>
<dbReference type="GO" id="GO:0000287">
    <property type="term" value="F:magnesium ion binding"/>
    <property type="evidence" value="ECO:0007669"/>
    <property type="project" value="UniProtKB-UniRule"/>
</dbReference>
<dbReference type="GO" id="GO:0030976">
    <property type="term" value="F:thiamine pyrophosphate binding"/>
    <property type="evidence" value="ECO:0007669"/>
    <property type="project" value="UniProtKB-UniRule"/>
</dbReference>
<dbReference type="GO" id="GO:0052865">
    <property type="term" value="P:1-deoxy-D-xylulose 5-phosphate biosynthetic process"/>
    <property type="evidence" value="ECO:0007669"/>
    <property type="project" value="UniProtKB-UniPathway"/>
</dbReference>
<dbReference type="GO" id="GO:0019288">
    <property type="term" value="P:isopentenyl diphosphate biosynthetic process, methylerythritol 4-phosphate pathway"/>
    <property type="evidence" value="ECO:0007669"/>
    <property type="project" value="TreeGrafter"/>
</dbReference>
<dbReference type="GO" id="GO:0016114">
    <property type="term" value="P:terpenoid biosynthetic process"/>
    <property type="evidence" value="ECO:0007669"/>
    <property type="project" value="UniProtKB-UniRule"/>
</dbReference>
<dbReference type="GO" id="GO:0009228">
    <property type="term" value="P:thiamine biosynthetic process"/>
    <property type="evidence" value="ECO:0007669"/>
    <property type="project" value="UniProtKB-UniRule"/>
</dbReference>
<dbReference type="CDD" id="cd02007">
    <property type="entry name" value="TPP_DXS"/>
    <property type="match status" value="1"/>
</dbReference>
<dbReference type="CDD" id="cd07033">
    <property type="entry name" value="TPP_PYR_DXS_TK_like"/>
    <property type="match status" value="1"/>
</dbReference>
<dbReference type="FunFam" id="3.40.50.970:FF:000005">
    <property type="entry name" value="1-deoxy-D-xylulose-5-phosphate synthase"/>
    <property type="match status" value="1"/>
</dbReference>
<dbReference type="Gene3D" id="3.40.50.920">
    <property type="match status" value="1"/>
</dbReference>
<dbReference type="Gene3D" id="3.40.50.970">
    <property type="match status" value="2"/>
</dbReference>
<dbReference type="HAMAP" id="MF_00315">
    <property type="entry name" value="DXP_synth"/>
    <property type="match status" value="1"/>
</dbReference>
<dbReference type="InterPro" id="IPR005477">
    <property type="entry name" value="Dxylulose-5-P_synthase"/>
</dbReference>
<dbReference type="InterPro" id="IPR029061">
    <property type="entry name" value="THDP-binding"/>
</dbReference>
<dbReference type="InterPro" id="IPR009014">
    <property type="entry name" value="Transketo_C/PFOR_II"/>
</dbReference>
<dbReference type="InterPro" id="IPR005475">
    <property type="entry name" value="Transketolase-like_Pyr-bd"/>
</dbReference>
<dbReference type="InterPro" id="IPR020826">
    <property type="entry name" value="Transketolase_BS"/>
</dbReference>
<dbReference type="InterPro" id="IPR033248">
    <property type="entry name" value="Transketolase_C"/>
</dbReference>
<dbReference type="InterPro" id="IPR049557">
    <property type="entry name" value="Transketolase_CS"/>
</dbReference>
<dbReference type="NCBIfam" id="TIGR00204">
    <property type="entry name" value="dxs"/>
    <property type="match status" value="1"/>
</dbReference>
<dbReference type="NCBIfam" id="NF003933">
    <property type="entry name" value="PRK05444.2-2"/>
    <property type="match status" value="1"/>
</dbReference>
<dbReference type="PANTHER" id="PTHR43322">
    <property type="entry name" value="1-D-DEOXYXYLULOSE 5-PHOSPHATE SYNTHASE-RELATED"/>
    <property type="match status" value="1"/>
</dbReference>
<dbReference type="PANTHER" id="PTHR43322:SF5">
    <property type="entry name" value="1-DEOXY-D-XYLULOSE-5-PHOSPHATE SYNTHASE, CHLOROPLASTIC"/>
    <property type="match status" value="1"/>
</dbReference>
<dbReference type="Pfam" id="PF13292">
    <property type="entry name" value="DXP_synthase_N"/>
    <property type="match status" value="1"/>
</dbReference>
<dbReference type="Pfam" id="PF02779">
    <property type="entry name" value="Transket_pyr"/>
    <property type="match status" value="1"/>
</dbReference>
<dbReference type="Pfam" id="PF02780">
    <property type="entry name" value="Transketolase_C"/>
    <property type="match status" value="1"/>
</dbReference>
<dbReference type="SMART" id="SM00861">
    <property type="entry name" value="Transket_pyr"/>
    <property type="match status" value="1"/>
</dbReference>
<dbReference type="SUPFAM" id="SSF52518">
    <property type="entry name" value="Thiamin diphosphate-binding fold (THDP-binding)"/>
    <property type="match status" value="2"/>
</dbReference>
<dbReference type="SUPFAM" id="SSF52922">
    <property type="entry name" value="TK C-terminal domain-like"/>
    <property type="match status" value="1"/>
</dbReference>
<dbReference type="PROSITE" id="PS00801">
    <property type="entry name" value="TRANSKETOLASE_1"/>
    <property type="match status" value="1"/>
</dbReference>
<dbReference type="PROSITE" id="PS00802">
    <property type="entry name" value="TRANSKETOLASE_2"/>
    <property type="match status" value="1"/>
</dbReference>
<organism>
    <name type="scientific">Tropheryma whipplei (strain TW08/27)</name>
    <name type="common">Whipple's bacillus</name>
    <dbReference type="NCBI Taxonomy" id="218496"/>
    <lineage>
        <taxon>Bacteria</taxon>
        <taxon>Bacillati</taxon>
        <taxon>Actinomycetota</taxon>
        <taxon>Actinomycetes</taxon>
        <taxon>Micrococcales</taxon>
        <taxon>Tropherymataceae</taxon>
        <taxon>Tropheryma</taxon>
    </lineage>
</organism>
<keyword id="KW-0414">Isoprene biosynthesis</keyword>
<keyword id="KW-0460">Magnesium</keyword>
<keyword id="KW-0479">Metal-binding</keyword>
<keyword id="KW-0784">Thiamine biosynthesis</keyword>
<keyword id="KW-0786">Thiamine pyrophosphate</keyword>
<keyword id="KW-0808">Transferase</keyword>
<reference key="1">
    <citation type="journal article" date="2003" name="Lancet">
        <title>Sequencing and analysis of the genome of the Whipple's disease bacterium Tropheryma whipplei.</title>
        <authorList>
            <person name="Bentley S.D."/>
            <person name="Maiwald M."/>
            <person name="Murphy L.D."/>
            <person name="Pallen M.J."/>
            <person name="Yeats C.A."/>
            <person name="Dover L.G."/>
            <person name="Norbertczak H.T."/>
            <person name="Besra G.S."/>
            <person name="Quail M.A."/>
            <person name="Harris D.E."/>
            <person name="von Herbay A."/>
            <person name="Goble A."/>
            <person name="Rutter S."/>
            <person name="Squares R."/>
            <person name="Squares S."/>
            <person name="Barrell B.G."/>
            <person name="Parkhill J."/>
            <person name="Relman D.A."/>
        </authorList>
    </citation>
    <scope>NUCLEOTIDE SEQUENCE [LARGE SCALE GENOMIC DNA]</scope>
    <source>
        <strain>TW08/27</strain>
    </source>
</reference>
<protein>
    <recommendedName>
        <fullName evidence="1">1-deoxy-D-xylulose-5-phosphate synthase</fullName>
        <ecNumber evidence="1">2.2.1.7</ecNumber>
    </recommendedName>
    <alternativeName>
        <fullName evidence="1">1-deoxyxylulose-5-phosphate synthase</fullName>
        <shortName evidence="1">DXP synthase</shortName>
        <shortName evidence="1">DXPS</shortName>
    </alternativeName>
</protein>
<feature type="chain" id="PRO_0000189167" description="1-deoxy-D-xylulose-5-phosphate synthase">
    <location>
        <begin position="1"/>
        <end position="629"/>
    </location>
</feature>
<feature type="binding site" evidence="1">
    <location>
        <position position="79"/>
    </location>
    <ligand>
        <name>thiamine diphosphate</name>
        <dbReference type="ChEBI" id="CHEBI:58937"/>
    </ligand>
</feature>
<feature type="binding site" evidence="1">
    <location>
        <begin position="119"/>
        <end position="121"/>
    </location>
    <ligand>
        <name>thiamine diphosphate</name>
        <dbReference type="ChEBI" id="CHEBI:58937"/>
    </ligand>
</feature>
<feature type="binding site" evidence="1">
    <location>
        <position position="150"/>
    </location>
    <ligand>
        <name>Mg(2+)</name>
        <dbReference type="ChEBI" id="CHEBI:18420"/>
    </ligand>
</feature>
<feature type="binding site" evidence="1">
    <location>
        <begin position="151"/>
        <end position="152"/>
    </location>
    <ligand>
        <name>thiamine diphosphate</name>
        <dbReference type="ChEBI" id="CHEBI:58937"/>
    </ligand>
</feature>
<feature type="binding site" evidence="1">
    <location>
        <position position="180"/>
    </location>
    <ligand>
        <name>Mg(2+)</name>
        <dbReference type="ChEBI" id="CHEBI:18420"/>
    </ligand>
</feature>
<feature type="binding site" evidence="1">
    <location>
        <position position="180"/>
    </location>
    <ligand>
        <name>thiamine diphosphate</name>
        <dbReference type="ChEBI" id="CHEBI:58937"/>
    </ligand>
</feature>
<feature type="binding site" evidence="1">
    <location>
        <position position="292"/>
    </location>
    <ligand>
        <name>thiamine diphosphate</name>
        <dbReference type="ChEBI" id="CHEBI:58937"/>
    </ligand>
</feature>
<feature type="binding site" evidence="1">
    <location>
        <position position="377"/>
    </location>
    <ligand>
        <name>thiamine diphosphate</name>
        <dbReference type="ChEBI" id="CHEBI:58937"/>
    </ligand>
</feature>
<proteinExistence type="inferred from homology"/>
<accession>Q83I20</accession>
<name>DXS_TROW8</name>
<comment type="function">
    <text evidence="1">Catalyzes the acyloin condensation reaction between C atoms 2 and 3 of pyruvate and glyceraldehyde 3-phosphate to yield 1-deoxy-D-xylulose-5-phosphate (DXP).</text>
</comment>
<comment type="catalytic activity">
    <reaction evidence="1">
        <text>D-glyceraldehyde 3-phosphate + pyruvate + H(+) = 1-deoxy-D-xylulose 5-phosphate + CO2</text>
        <dbReference type="Rhea" id="RHEA:12605"/>
        <dbReference type="ChEBI" id="CHEBI:15361"/>
        <dbReference type="ChEBI" id="CHEBI:15378"/>
        <dbReference type="ChEBI" id="CHEBI:16526"/>
        <dbReference type="ChEBI" id="CHEBI:57792"/>
        <dbReference type="ChEBI" id="CHEBI:59776"/>
        <dbReference type="EC" id="2.2.1.7"/>
    </reaction>
</comment>
<comment type="cofactor">
    <cofactor evidence="1">
        <name>Mg(2+)</name>
        <dbReference type="ChEBI" id="CHEBI:18420"/>
    </cofactor>
    <text evidence="1">Binds 1 Mg(2+) ion per subunit.</text>
</comment>
<comment type="cofactor">
    <cofactor evidence="1">
        <name>thiamine diphosphate</name>
        <dbReference type="ChEBI" id="CHEBI:58937"/>
    </cofactor>
    <text evidence="1">Binds 1 thiamine pyrophosphate per subunit.</text>
</comment>
<comment type="pathway">
    <text evidence="1">Metabolic intermediate biosynthesis; 1-deoxy-D-xylulose 5-phosphate biosynthesis; 1-deoxy-D-xylulose 5-phosphate from D-glyceraldehyde 3-phosphate and pyruvate: step 1/1.</text>
</comment>
<comment type="subunit">
    <text evidence="1">Homodimer.</text>
</comment>
<comment type="similarity">
    <text evidence="1">Belongs to the transketolase family. DXPS subfamily.</text>
</comment>
<sequence length="629" mass="68649">MCTKRQYGLLESIRSPRDLDSFTPHQLDELECQVRDFLIQSVAKTGGHLGSNLGVVELSIALHRSFRSPEDCIIFDVGHQCYVHKLITGRHDFKALRCKNGLSGYPSRHESNHDIVENSHASAALSWADGVSRARTLLGNDNYVIAVVGDGSLTGGMCWEALNNISDDNNRRLVIVVNDNGRSYARTIGGIARFLNAVRASKSYLWLRESSEAVFSHMGSPGRRLYQGIRGAIHGFLSRFSSSNKLFSNLDIRYLGPINGHNRKALEKAFKQAKQYARPIIVHVITEKGHGYPPALEDALDCLHTVGVIDPSTGKSASVQGQVRQDTWTGVFGEELLRLAESNTNIVAVTAAMLHPTGLSMFAEKFPHRVFDVGIAEQHAVASAAGLAYEGLHPVVAIYSTFMNRAFDQVMMDVALHGAPVTFVLDRAGITGPDGASHHGIWDLSLLRIVPGIKLYAPRDASTLRNTLALVCSEDCPTAIRFPRGSVCDDLPALRSLDDGIDVLYGSCDREDIVIVAIGVMAHACVRAAQLLAESGIESTVINPVCFWPLHRQVLARVSKAKLVVLAEEGAKSPGLGDYIAGRRLLEFVIPGDFQPQGSRDELLDAIGLNGEHIARKIKARFNQIINCV</sequence>